<organism>
    <name type="scientific">Bacillus thuringiensis subsp. konkukian (strain 97-27)</name>
    <dbReference type="NCBI Taxonomy" id="281309"/>
    <lineage>
        <taxon>Bacteria</taxon>
        <taxon>Bacillati</taxon>
        <taxon>Bacillota</taxon>
        <taxon>Bacilli</taxon>
        <taxon>Bacillales</taxon>
        <taxon>Bacillaceae</taxon>
        <taxon>Bacillus</taxon>
        <taxon>Bacillus cereus group</taxon>
    </lineage>
</organism>
<dbReference type="EMBL" id="AE017355">
    <property type="protein sequence ID" value="AAT63884.1"/>
    <property type="molecule type" value="Genomic_DNA"/>
</dbReference>
<dbReference type="RefSeq" id="WP_000766080.1">
    <property type="nucleotide sequence ID" value="NC_005957.1"/>
</dbReference>
<dbReference type="RefSeq" id="YP_034481.1">
    <property type="nucleotide sequence ID" value="NC_005957.1"/>
</dbReference>
<dbReference type="SMR" id="Q6HPN9"/>
<dbReference type="GeneID" id="93010924"/>
<dbReference type="KEGG" id="btk:BT9727_0125"/>
<dbReference type="PATRIC" id="fig|281309.8.peg.126"/>
<dbReference type="HOGENOM" id="CLU_055188_4_2_9"/>
<dbReference type="Proteomes" id="UP000001301">
    <property type="component" value="Chromosome"/>
</dbReference>
<dbReference type="GO" id="GO:0022625">
    <property type="term" value="C:cytosolic large ribosomal subunit"/>
    <property type="evidence" value="ECO:0007669"/>
    <property type="project" value="TreeGrafter"/>
</dbReference>
<dbReference type="GO" id="GO:0019843">
    <property type="term" value="F:rRNA binding"/>
    <property type="evidence" value="ECO:0007669"/>
    <property type="project" value="UniProtKB-UniRule"/>
</dbReference>
<dbReference type="GO" id="GO:0003735">
    <property type="term" value="F:structural constituent of ribosome"/>
    <property type="evidence" value="ECO:0007669"/>
    <property type="project" value="InterPro"/>
</dbReference>
<dbReference type="GO" id="GO:0006412">
    <property type="term" value="P:translation"/>
    <property type="evidence" value="ECO:0007669"/>
    <property type="project" value="UniProtKB-UniRule"/>
</dbReference>
<dbReference type="FunFam" id="3.100.10.10:FF:000004">
    <property type="entry name" value="50S ribosomal protein L15"/>
    <property type="match status" value="1"/>
</dbReference>
<dbReference type="Gene3D" id="3.100.10.10">
    <property type="match status" value="1"/>
</dbReference>
<dbReference type="HAMAP" id="MF_01341">
    <property type="entry name" value="Ribosomal_uL15"/>
    <property type="match status" value="1"/>
</dbReference>
<dbReference type="InterPro" id="IPR030878">
    <property type="entry name" value="Ribosomal_uL15"/>
</dbReference>
<dbReference type="InterPro" id="IPR021131">
    <property type="entry name" value="Ribosomal_uL15/eL18"/>
</dbReference>
<dbReference type="InterPro" id="IPR036227">
    <property type="entry name" value="Ribosomal_uL15/eL18_sf"/>
</dbReference>
<dbReference type="InterPro" id="IPR005749">
    <property type="entry name" value="Ribosomal_uL15_bac-type"/>
</dbReference>
<dbReference type="InterPro" id="IPR001196">
    <property type="entry name" value="Ribosomal_uL15_CS"/>
</dbReference>
<dbReference type="NCBIfam" id="TIGR01071">
    <property type="entry name" value="rplO_bact"/>
    <property type="match status" value="1"/>
</dbReference>
<dbReference type="PANTHER" id="PTHR12934">
    <property type="entry name" value="50S RIBOSOMAL PROTEIN L15"/>
    <property type="match status" value="1"/>
</dbReference>
<dbReference type="PANTHER" id="PTHR12934:SF11">
    <property type="entry name" value="LARGE RIBOSOMAL SUBUNIT PROTEIN UL15M"/>
    <property type="match status" value="1"/>
</dbReference>
<dbReference type="Pfam" id="PF00828">
    <property type="entry name" value="Ribosomal_L27A"/>
    <property type="match status" value="1"/>
</dbReference>
<dbReference type="SUPFAM" id="SSF52080">
    <property type="entry name" value="Ribosomal proteins L15p and L18e"/>
    <property type="match status" value="1"/>
</dbReference>
<dbReference type="PROSITE" id="PS00475">
    <property type="entry name" value="RIBOSOMAL_L15"/>
    <property type="match status" value="1"/>
</dbReference>
<gene>
    <name evidence="1" type="primary">rplO</name>
    <name type="ordered locus">BT9727_0125</name>
</gene>
<comment type="function">
    <text evidence="1">Binds to the 23S rRNA.</text>
</comment>
<comment type="subunit">
    <text evidence="1">Part of the 50S ribosomal subunit.</text>
</comment>
<comment type="similarity">
    <text evidence="1">Belongs to the universal ribosomal protein uL15 family.</text>
</comment>
<feature type="chain" id="PRO_0000104675" description="Large ribosomal subunit protein uL15">
    <location>
        <begin position="1"/>
        <end position="146"/>
    </location>
</feature>
<feature type="region of interest" description="Disordered" evidence="2">
    <location>
        <begin position="1"/>
        <end position="52"/>
    </location>
</feature>
<feature type="compositionally biased region" description="Basic and acidic residues" evidence="2">
    <location>
        <begin position="1"/>
        <end position="13"/>
    </location>
</feature>
<feature type="compositionally biased region" description="Gly residues" evidence="2">
    <location>
        <begin position="21"/>
        <end position="31"/>
    </location>
</feature>
<feature type="compositionally biased region" description="Gly residues" evidence="2">
    <location>
        <begin position="42"/>
        <end position="52"/>
    </location>
</feature>
<protein>
    <recommendedName>
        <fullName evidence="1">Large ribosomal subunit protein uL15</fullName>
    </recommendedName>
    <alternativeName>
        <fullName evidence="3">50S ribosomal protein L15</fullName>
    </alternativeName>
</protein>
<reference key="1">
    <citation type="journal article" date="2006" name="J. Bacteriol.">
        <title>Pathogenomic sequence analysis of Bacillus cereus and Bacillus thuringiensis isolates closely related to Bacillus anthracis.</title>
        <authorList>
            <person name="Han C.S."/>
            <person name="Xie G."/>
            <person name="Challacombe J.F."/>
            <person name="Altherr M.R."/>
            <person name="Bhotika S.S."/>
            <person name="Bruce D."/>
            <person name="Campbell C.S."/>
            <person name="Campbell M.L."/>
            <person name="Chen J."/>
            <person name="Chertkov O."/>
            <person name="Cleland C."/>
            <person name="Dimitrijevic M."/>
            <person name="Doggett N.A."/>
            <person name="Fawcett J.J."/>
            <person name="Glavina T."/>
            <person name="Goodwin L.A."/>
            <person name="Hill K.K."/>
            <person name="Hitchcock P."/>
            <person name="Jackson P.J."/>
            <person name="Keim P."/>
            <person name="Kewalramani A.R."/>
            <person name="Longmire J."/>
            <person name="Lucas S."/>
            <person name="Malfatti S."/>
            <person name="McMurry K."/>
            <person name="Meincke L.J."/>
            <person name="Misra M."/>
            <person name="Moseman B.L."/>
            <person name="Mundt M."/>
            <person name="Munk A.C."/>
            <person name="Okinaka R.T."/>
            <person name="Parson-Quintana B."/>
            <person name="Reilly L.P."/>
            <person name="Richardson P."/>
            <person name="Robinson D.L."/>
            <person name="Rubin E."/>
            <person name="Saunders E."/>
            <person name="Tapia R."/>
            <person name="Tesmer J.G."/>
            <person name="Thayer N."/>
            <person name="Thompson L.S."/>
            <person name="Tice H."/>
            <person name="Ticknor L.O."/>
            <person name="Wills P.L."/>
            <person name="Brettin T.S."/>
            <person name="Gilna P."/>
        </authorList>
    </citation>
    <scope>NUCLEOTIDE SEQUENCE [LARGE SCALE GENOMIC DNA]</scope>
    <source>
        <strain>97-27</strain>
    </source>
</reference>
<proteinExistence type="inferred from homology"/>
<evidence type="ECO:0000255" key="1">
    <source>
        <dbReference type="HAMAP-Rule" id="MF_01341"/>
    </source>
</evidence>
<evidence type="ECO:0000256" key="2">
    <source>
        <dbReference type="SAM" id="MobiDB-lite"/>
    </source>
</evidence>
<evidence type="ECO:0000305" key="3"/>
<sequence>MKLHELKPAEGSRKVRNRVGRGIGSGNGKTAGKGHKGQNARSGGGVRLGFEGGQTPLFRRLPKRGFTNINRKEFAIVNLSTLNRFEDGTEVTPELLLETGVISKLNDGVKILASGAVEKKLTVKAHKFSSSAKEAIEAAGGSVEVI</sequence>
<keyword id="KW-0687">Ribonucleoprotein</keyword>
<keyword id="KW-0689">Ribosomal protein</keyword>
<keyword id="KW-0694">RNA-binding</keyword>
<keyword id="KW-0699">rRNA-binding</keyword>
<name>RL15_BACHK</name>
<accession>Q6HPN9</accession>